<protein>
    <recommendedName>
        <fullName evidence="2 7">tRNA 5-carboxymethoxyuridine methyltransferase</fullName>
        <ecNumber evidence="2 3">2.1.1.-</ecNumber>
    </recommendedName>
    <alternativeName>
        <fullName evidence="2 5">cmo5U methyltransferase</fullName>
    </alternativeName>
</protein>
<comment type="function">
    <text evidence="3">Catalyzes the methylation of 5-carboxymethoxyuridine (cmo5U) to form 5-methoxycarbonylmethoxyuridine (mcmo5U) at position 34 in tRNAs. Four tRNAs (tRNA(Ala1), tRNA(Ser1), tRNA(Pro3) and tRNA(Thr4)) are fully modified with mcmo5U in stationary-phase E.coli. Also present at low frequency in tRNA(Leu3) and tRNA(Val1).</text>
</comment>
<comment type="catalytic activity">
    <reaction evidence="2 3">
        <text>5-carboxymethoxyuridine(34) in tRNA + S-adenosyl-L-methionine = 5-methoxycarbonylmethoxyuridine(34) in tRNA + S-adenosyl-L-homocysteine</text>
        <dbReference type="Rhea" id="RHEA:54080"/>
        <dbReference type="Rhea" id="RHEA-COMP:13383"/>
        <dbReference type="Rhea" id="RHEA-COMP:13781"/>
        <dbReference type="ChEBI" id="CHEBI:57856"/>
        <dbReference type="ChEBI" id="CHEBI:59789"/>
        <dbReference type="ChEBI" id="CHEBI:136879"/>
        <dbReference type="ChEBI" id="CHEBI:138053"/>
    </reaction>
</comment>
<comment type="induction">
    <text evidence="4">Expression is positively regulated by H-NS.</text>
</comment>
<comment type="similarity">
    <text evidence="2 7">Belongs to the class I-like SAM-binding methyltransferase superfamily. CmoM family.</text>
</comment>
<sequence>MQDRNFDDIAEKFSRNIYGTTKGQLRQAILWQDLDRVLAEMGPQKLRVLDAGGGEGQTAIKMAERGHQVILCDLSAQMIDRAKQAAEAKGVSDNMQFIHCAAQDVASHLETPVDLILFHAVLEWVADPRSVLQTLWSVLRPGGVLSLMFYNAHGLLMHNMVAGNFDYVQAGMPKKKKRTLSPDYPRDPAQVYLWLEEAGWQIMGKTGVRVFHDYLREKHQQRDCYEALLELETRYCRQEPYITLGRYIHVTARKPQSKDKV</sequence>
<reference key="1">
    <citation type="journal article" date="1994" name="Mol. Gen. Genet.">
        <title>New killing system controlled by two genes located immediately upstream of the mukB gene in Escherichia coli.</title>
        <authorList>
            <person name="Feng J."/>
            <person name="Yamanaka K."/>
            <person name="Niki H."/>
            <person name="Ogura T."/>
            <person name="Hiraga S."/>
        </authorList>
    </citation>
    <scope>NUCLEOTIDE SEQUENCE [GENOMIC DNA]</scope>
    <source>
        <strain>K12 / W3110 / ATCC 27325 / DSM 5911</strain>
    </source>
</reference>
<reference key="2">
    <citation type="journal article" date="1996" name="DNA Res.">
        <title>A 718-kb DNA sequence of the Escherichia coli K-12 genome corresponding to the 12.7-28.0 min region on the linkage map.</title>
        <authorList>
            <person name="Oshima T."/>
            <person name="Aiba H."/>
            <person name="Baba T."/>
            <person name="Fujita K."/>
            <person name="Hayashi K."/>
            <person name="Honjo A."/>
            <person name="Ikemoto K."/>
            <person name="Inada T."/>
            <person name="Itoh T."/>
            <person name="Kajihara M."/>
            <person name="Kanai K."/>
            <person name="Kashimoto K."/>
            <person name="Kimura S."/>
            <person name="Kitagawa M."/>
            <person name="Makino K."/>
            <person name="Masuda S."/>
            <person name="Miki T."/>
            <person name="Mizobuchi K."/>
            <person name="Mori H."/>
            <person name="Motomura K."/>
            <person name="Nakamura Y."/>
            <person name="Nashimoto H."/>
            <person name="Nishio Y."/>
            <person name="Saito N."/>
            <person name="Sampei G."/>
            <person name="Seki Y."/>
            <person name="Tagami H."/>
            <person name="Takemoto K."/>
            <person name="Wada C."/>
            <person name="Yamamoto Y."/>
            <person name="Yano M."/>
            <person name="Horiuchi T."/>
        </authorList>
    </citation>
    <scope>NUCLEOTIDE SEQUENCE [LARGE SCALE GENOMIC DNA]</scope>
    <source>
        <strain>K12 / W3110 / ATCC 27325 / DSM 5911</strain>
    </source>
</reference>
<reference key="3">
    <citation type="journal article" date="1997" name="Science">
        <title>The complete genome sequence of Escherichia coli K-12.</title>
        <authorList>
            <person name="Blattner F.R."/>
            <person name="Plunkett G. III"/>
            <person name="Bloch C.A."/>
            <person name="Perna N.T."/>
            <person name="Burland V."/>
            <person name="Riley M."/>
            <person name="Collado-Vides J."/>
            <person name="Glasner J.D."/>
            <person name="Rode C.K."/>
            <person name="Mayhew G.F."/>
            <person name="Gregor J."/>
            <person name="Davis N.W."/>
            <person name="Kirkpatrick H.A."/>
            <person name="Goeden M.A."/>
            <person name="Rose D.J."/>
            <person name="Mau B."/>
            <person name="Shao Y."/>
        </authorList>
    </citation>
    <scope>NUCLEOTIDE SEQUENCE [LARGE SCALE GENOMIC DNA]</scope>
    <source>
        <strain>K12 / MG1655 / ATCC 47076</strain>
    </source>
</reference>
<reference key="4">
    <citation type="journal article" date="2006" name="Mol. Syst. Biol.">
        <title>Highly accurate genome sequences of Escherichia coli K-12 strains MG1655 and W3110.</title>
        <authorList>
            <person name="Hayashi K."/>
            <person name="Morooka N."/>
            <person name="Yamamoto Y."/>
            <person name="Fujita K."/>
            <person name="Isono K."/>
            <person name="Choi S."/>
            <person name="Ohtsubo E."/>
            <person name="Baba T."/>
            <person name="Wanner B.L."/>
            <person name="Mori H."/>
            <person name="Horiuchi T."/>
        </authorList>
    </citation>
    <scope>NUCLEOTIDE SEQUENCE [LARGE SCALE GENOMIC DNA]</scope>
    <source>
        <strain>K12 / W3110 / ATCC 27325 / DSM 5911</strain>
    </source>
</reference>
<reference key="5">
    <citation type="journal article" date="1995" name="FEMS Microbiol. Lett.">
        <title>Characterization of the smtA gene encoding an S-adenosylmethionine-dependent methyltransferase of Escherichia coli.</title>
        <authorList>
            <person name="Yamanaka K."/>
            <person name="Ogura T."/>
            <person name="Niki H."/>
            <person name="Hiraga S."/>
        </authorList>
    </citation>
    <scope>INDUCTION</scope>
</reference>
<reference key="6">
    <citation type="journal article" date="2016" name="Nucleic Acids Res.">
        <title>Biogenesis and growth phase-dependent alteration of 5-methoxycarbonylmethoxyuridine in tRNA anticodons.</title>
        <authorList>
            <person name="Sakai Y."/>
            <person name="Miyauchi K."/>
            <person name="Kimura S."/>
            <person name="Suzuki T."/>
        </authorList>
    </citation>
    <scope>FUNCTION</scope>
    <scope>CATALYTIC ACTIVITY</scope>
    <scope>MUTAGENESIS OF ARG-26; ASP-73; TRP-124; TYR-150; ARG-209; ASP-213; ARG-246 AND TYR-247</scope>
    <source>
        <strain>K12 / BW25113</strain>
    </source>
</reference>
<gene>
    <name evidence="2 5" type="primary">cmoM</name>
    <name evidence="6" type="synonym">smtA</name>
    <name type="synonym">ycbD</name>
    <name type="ordered locus">b0921</name>
    <name type="ordered locus">JW0904</name>
</gene>
<keyword id="KW-0002">3D-structure</keyword>
<keyword id="KW-0489">Methyltransferase</keyword>
<keyword id="KW-1185">Reference proteome</keyword>
<keyword id="KW-0949">S-adenosyl-L-methionine</keyword>
<keyword id="KW-0808">Transferase</keyword>
<keyword id="KW-0819">tRNA processing</keyword>
<dbReference type="EC" id="2.1.1.-" evidence="2 3"/>
<dbReference type="EMBL" id="D26440">
    <property type="protein sequence ID" value="BAA05456.1"/>
    <property type="molecule type" value="Genomic_DNA"/>
</dbReference>
<dbReference type="EMBL" id="U00096">
    <property type="protein sequence ID" value="AAC74007.1"/>
    <property type="molecule type" value="Genomic_DNA"/>
</dbReference>
<dbReference type="EMBL" id="AP009048">
    <property type="protein sequence ID" value="BAA35667.1"/>
    <property type="molecule type" value="Genomic_DNA"/>
</dbReference>
<dbReference type="PIR" id="H64831">
    <property type="entry name" value="H64831"/>
</dbReference>
<dbReference type="RefSeq" id="NP_415441.1">
    <property type="nucleotide sequence ID" value="NC_000913.3"/>
</dbReference>
<dbReference type="RefSeq" id="WP_001298300.1">
    <property type="nucleotide sequence ID" value="NZ_SSZK01000002.1"/>
</dbReference>
<dbReference type="PDB" id="8JOZ">
    <property type="method" value="X-ray"/>
    <property type="resolution" value="2.22 A"/>
    <property type="chains" value="A=2-261"/>
</dbReference>
<dbReference type="PDBsum" id="8JOZ"/>
<dbReference type="SMR" id="P36566"/>
<dbReference type="BioGRID" id="4261464">
    <property type="interactions" value="150"/>
</dbReference>
<dbReference type="FunCoup" id="P36566">
    <property type="interactions" value="40"/>
</dbReference>
<dbReference type="IntAct" id="P36566">
    <property type="interactions" value="11"/>
</dbReference>
<dbReference type="STRING" id="511145.b0921"/>
<dbReference type="jPOST" id="P36566"/>
<dbReference type="PaxDb" id="511145-b0921"/>
<dbReference type="EnsemblBacteria" id="AAC74007">
    <property type="protein sequence ID" value="AAC74007"/>
    <property type="gene ID" value="b0921"/>
</dbReference>
<dbReference type="GeneID" id="93776494"/>
<dbReference type="GeneID" id="945547"/>
<dbReference type="KEGG" id="ecj:JW0904"/>
<dbReference type="KEGG" id="eco:b0921"/>
<dbReference type="KEGG" id="ecoc:C3026_05665"/>
<dbReference type="PATRIC" id="fig|1411691.4.peg.1355"/>
<dbReference type="EchoBASE" id="EB2086"/>
<dbReference type="eggNOG" id="COG2227">
    <property type="taxonomic scope" value="Bacteria"/>
</dbReference>
<dbReference type="HOGENOM" id="CLU_061533_0_1_6"/>
<dbReference type="InParanoid" id="P36566"/>
<dbReference type="OMA" id="CHGVLEY"/>
<dbReference type="OrthoDB" id="4697647at2"/>
<dbReference type="PhylomeDB" id="P36566"/>
<dbReference type="BioCyc" id="EcoCyc:EG12167-MONOMER"/>
<dbReference type="BioCyc" id="MetaCyc:EG12167-MONOMER"/>
<dbReference type="PRO" id="PR:P36566"/>
<dbReference type="Proteomes" id="UP000000625">
    <property type="component" value="Chromosome"/>
</dbReference>
<dbReference type="GO" id="GO:0008168">
    <property type="term" value="F:methyltransferase activity"/>
    <property type="evidence" value="ECO:0000318"/>
    <property type="project" value="GO_Central"/>
</dbReference>
<dbReference type="GO" id="GO:0097697">
    <property type="term" value="F:tRNA (5-carboxymethoxyuridine(34)-5-O)-methyltransferase activity"/>
    <property type="evidence" value="ECO:0000314"/>
    <property type="project" value="EcoCyc"/>
</dbReference>
<dbReference type="GO" id="GO:0030488">
    <property type="term" value="P:tRNA methylation"/>
    <property type="evidence" value="ECO:0000315"/>
    <property type="project" value="EcoCyc"/>
</dbReference>
<dbReference type="GO" id="GO:0002098">
    <property type="term" value="P:tRNA wobble uridine modification"/>
    <property type="evidence" value="ECO:0000315"/>
    <property type="project" value="EcoCyc"/>
</dbReference>
<dbReference type="CDD" id="cd02440">
    <property type="entry name" value="AdoMet_MTases"/>
    <property type="match status" value="1"/>
</dbReference>
<dbReference type="FunFam" id="3.40.50.150:FF:000091">
    <property type="entry name" value="tRNA 5-carboxymethoxyuridine methyltransferase"/>
    <property type="match status" value="1"/>
</dbReference>
<dbReference type="Gene3D" id="3.40.50.150">
    <property type="entry name" value="Vaccinia Virus protein VP39"/>
    <property type="match status" value="1"/>
</dbReference>
<dbReference type="HAMAP" id="MF_02057">
    <property type="entry name" value="tRNA_methyltr_CmoM"/>
    <property type="match status" value="1"/>
</dbReference>
<dbReference type="InterPro" id="IPR033664">
    <property type="entry name" value="Cmo5U_methylTrfase"/>
</dbReference>
<dbReference type="InterPro" id="IPR025714">
    <property type="entry name" value="Methyltranfer_dom"/>
</dbReference>
<dbReference type="InterPro" id="IPR029063">
    <property type="entry name" value="SAM-dependent_MTases_sf"/>
</dbReference>
<dbReference type="NCBIfam" id="NF008264">
    <property type="entry name" value="PRK11036.1"/>
    <property type="match status" value="1"/>
</dbReference>
<dbReference type="PANTHER" id="PTHR43861">
    <property type="entry name" value="TRANS-ACONITATE 2-METHYLTRANSFERASE-RELATED"/>
    <property type="match status" value="1"/>
</dbReference>
<dbReference type="Pfam" id="PF13847">
    <property type="entry name" value="Methyltransf_31"/>
    <property type="match status" value="1"/>
</dbReference>
<dbReference type="SUPFAM" id="SSF53335">
    <property type="entry name" value="S-adenosyl-L-methionine-dependent methyltransferases"/>
    <property type="match status" value="1"/>
</dbReference>
<feature type="chain" id="PRO_0000071990" description="tRNA 5-carboxymethoxyuridine methyltransferase">
    <location>
        <begin position="1"/>
        <end position="261"/>
    </location>
</feature>
<feature type="binding site" evidence="1 2">
    <location>
        <position position="26"/>
    </location>
    <ligand>
        <name>S-adenosyl-L-methionine</name>
        <dbReference type="ChEBI" id="CHEBI:59789"/>
    </ligand>
</feature>
<feature type="binding site" evidence="1 2">
    <location>
        <begin position="52"/>
        <end position="53"/>
    </location>
    <ligand>
        <name>S-adenosyl-L-methionine</name>
        <dbReference type="ChEBI" id="CHEBI:59789"/>
    </ligand>
</feature>
<feature type="binding site" evidence="1 2">
    <location>
        <position position="73"/>
    </location>
    <ligand>
        <name>S-adenosyl-L-methionine</name>
        <dbReference type="ChEBI" id="CHEBI:59789"/>
    </ligand>
</feature>
<feature type="binding site" evidence="1 2">
    <location>
        <begin position="102"/>
        <end position="103"/>
    </location>
    <ligand>
        <name>S-adenosyl-L-methionine</name>
        <dbReference type="ChEBI" id="CHEBI:59789"/>
    </ligand>
</feature>
<feature type="binding site" evidence="1 2">
    <location>
        <position position="119"/>
    </location>
    <ligand>
        <name>S-adenosyl-L-methionine</name>
        <dbReference type="ChEBI" id="CHEBI:59789"/>
    </ligand>
</feature>
<feature type="mutagenesis site" description="Lack of activity." evidence="3">
    <original>R</original>
    <variation>A</variation>
    <location>
        <position position="26"/>
    </location>
</feature>
<feature type="mutagenesis site" description="Lack of activity." evidence="3">
    <original>D</original>
    <variation>A</variation>
    <location>
        <position position="73"/>
    </location>
</feature>
<feature type="mutagenesis site" description="Lack of activity." evidence="3">
    <original>W</original>
    <variation>A</variation>
    <location>
        <position position="124"/>
    </location>
</feature>
<feature type="mutagenesis site" description="Lack of activity." evidence="3">
    <original>Y</original>
    <variation>A</variation>
    <location>
        <position position="150"/>
    </location>
</feature>
<feature type="mutagenesis site" description="Lack of activity." evidence="3">
    <original>R</original>
    <variation>A</variation>
    <location>
        <position position="209"/>
    </location>
</feature>
<feature type="mutagenesis site" description="Lack of activity." evidence="3">
    <original>D</original>
    <variation>A</variation>
    <location>
        <position position="213"/>
    </location>
</feature>
<feature type="mutagenesis site" description="Lack of activity." evidence="3">
    <original>R</original>
    <variation>A</variation>
    <location>
        <position position="246"/>
    </location>
</feature>
<feature type="mutagenesis site" description="Decrease in activity." evidence="3">
    <original>Y</original>
    <variation>A</variation>
    <location>
        <position position="247"/>
    </location>
</feature>
<feature type="sequence conflict" description="In Ref. 1; BAA05456." evidence="7" ref="1">
    <original>L</original>
    <variation>V</variation>
    <location>
        <position position="180"/>
    </location>
</feature>
<feature type="helix" evidence="8">
    <location>
        <begin position="7"/>
        <end position="9"/>
    </location>
</feature>
<feature type="helix" evidence="8">
    <location>
        <begin position="10"/>
        <end position="16"/>
    </location>
</feature>
<feature type="turn" evidence="8">
    <location>
        <begin position="17"/>
        <end position="19"/>
    </location>
</feature>
<feature type="helix" evidence="8">
    <location>
        <begin position="21"/>
        <end position="40"/>
    </location>
</feature>
<feature type="strand" evidence="8">
    <location>
        <begin position="47"/>
        <end position="51"/>
    </location>
</feature>
<feature type="helix" evidence="8">
    <location>
        <begin position="57"/>
        <end position="64"/>
    </location>
</feature>
<feature type="strand" evidence="8">
    <location>
        <begin position="68"/>
        <end position="72"/>
    </location>
</feature>
<feature type="helix" evidence="8">
    <location>
        <begin position="76"/>
        <end position="87"/>
    </location>
</feature>
<feature type="turn" evidence="8">
    <location>
        <begin position="88"/>
        <end position="90"/>
    </location>
</feature>
<feature type="helix" evidence="8">
    <location>
        <begin position="92"/>
        <end position="94"/>
    </location>
</feature>
<feature type="strand" evidence="8">
    <location>
        <begin position="95"/>
        <end position="98"/>
    </location>
</feature>
<feature type="helix" evidence="8">
    <location>
        <begin position="102"/>
        <end position="108"/>
    </location>
</feature>
<feature type="strand" evidence="8">
    <location>
        <begin position="113"/>
        <end position="120"/>
    </location>
</feature>
<feature type="helix" evidence="8">
    <location>
        <begin position="122"/>
        <end position="124"/>
    </location>
</feature>
<feature type="helix" evidence="8">
    <location>
        <begin position="128"/>
        <end position="137"/>
    </location>
</feature>
<feature type="strand" evidence="8">
    <location>
        <begin position="139"/>
        <end position="151"/>
    </location>
</feature>
<feature type="helix" evidence="8">
    <location>
        <begin position="152"/>
        <end position="162"/>
    </location>
</feature>
<feature type="helix" evidence="8">
    <location>
        <begin position="165"/>
        <end position="169"/>
    </location>
</feature>
<feature type="helix" evidence="8">
    <location>
        <begin position="188"/>
        <end position="197"/>
    </location>
</feature>
<feature type="strand" evidence="8">
    <location>
        <begin position="201"/>
        <end position="211"/>
    </location>
</feature>
<feature type="helix" evidence="8">
    <location>
        <begin position="212"/>
        <end position="214"/>
    </location>
</feature>
<feature type="helix" evidence="8">
    <location>
        <begin position="220"/>
        <end position="223"/>
    </location>
</feature>
<feature type="helix" evidence="8">
    <location>
        <begin position="225"/>
        <end position="235"/>
    </location>
</feature>
<feature type="helix" evidence="8">
    <location>
        <begin position="241"/>
        <end position="244"/>
    </location>
</feature>
<feature type="strand" evidence="8">
    <location>
        <begin position="246"/>
        <end position="253"/>
    </location>
</feature>
<name>CMOM_ECOLI</name>
<organism>
    <name type="scientific">Escherichia coli (strain K12)</name>
    <dbReference type="NCBI Taxonomy" id="83333"/>
    <lineage>
        <taxon>Bacteria</taxon>
        <taxon>Pseudomonadati</taxon>
        <taxon>Pseudomonadota</taxon>
        <taxon>Gammaproteobacteria</taxon>
        <taxon>Enterobacterales</taxon>
        <taxon>Enterobacteriaceae</taxon>
        <taxon>Escherichia</taxon>
    </lineage>
</organism>
<proteinExistence type="evidence at protein level"/>
<accession>P36566</accession>
<accession>P77586</accession>
<evidence type="ECO:0000250" key="1">
    <source>
        <dbReference type="UniProtKB" id="Q8XDG3"/>
    </source>
</evidence>
<evidence type="ECO:0000255" key="2">
    <source>
        <dbReference type="HAMAP-Rule" id="MF_02057"/>
    </source>
</evidence>
<evidence type="ECO:0000269" key="3">
    <source>
    </source>
</evidence>
<evidence type="ECO:0000269" key="4">
    <source>
    </source>
</evidence>
<evidence type="ECO:0000303" key="5">
    <source>
    </source>
</evidence>
<evidence type="ECO:0000303" key="6">
    <source>
    </source>
</evidence>
<evidence type="ECO:0000305" key="7"/>
<evidence type="ECO:0007829" key="8">
    <source>
        <dbReference type="PDB" id="8JOZ"/>
    </source>
</evidence>